<accession>Q0IHY4</accession>
<keyword id="KW-0175">Coiled coil</keyword>
<keyword id="KW-0343">GTPase activation</keyword>
<keyword id="KW-1185">Reference proteome</keyword>
<reference key="1">
    <citation type="submission" date="2006-09" db="EMBL/GenBank/DDBJ databases">
        <authorList>
            <consortium name="NIH - Xenopus Gene Collection (XGC) project"/>
        </authorList>
    </citation>
    <scope>NUCLEOTIDE SEQUENCE [LARGE SCALE MRNA]</scope>
    <source>
        <tissue>Brain</tissue>
    </source>
</reference>
<sequence length="684" mass="76874">MVGPEDAGQGAVYRCGEERHGLTDAADEEEGEGEAGDRQTDILQLYISRPAIKMTNGDLNYLPQGGAGEGDMPSAGDMHSLSTHKEDIKQPNGGLLVADSTRPQGCACHRQCCSLSEAVPSPGTPPGSSPISSSSSSPVSARTVAGYFVSEEADRFRFLDVSRQSCRNTFEGSRRQSAPDHLADGLSLPAESPGTAEQDGDRPWKVGIAEFFSRNFFSKRTKDPKSSSSVPGWKLFGKVPPRETAQKDSKIIQQDDSSGSLSSVSTPNLLNTGEYEARTGRSCKAPSQSTRKKKFEFEPLSTTALILEDRPSNLPAKSVHETLRHRQEYDEMVAEAKKREVKEAQRRKKLMKERIRQEENIASAMVIWNTEILPNWDVMRSTRRVRDLWWQGLPPSIRGKVWSLAIGNELNITPELYEIFLSRAKERWKSFSETNSENENEDAGASLADREASLELIKLDISRTFPSLYIFQKGGPYHDLLHSILGAYTCYRPDVGYVQGMSFIAAVLILNLEEADAFIAFANLLNKPCQLAFFRVDHSMMLKYFAAFEVFFEENLPKLFFHFNAYSLTPDLYLIDWIFTLYSKSLPLDLACRVWDVFCRDGEEFLFRTALGILRLYEDILLQMDFIHIAQFLTKLPEDITSEKLFGCIAAIQMQNSNKKWTQVFTSLMKDYKEGDKMSQASKT</sequence>
<gene>
    <name type="primary">tbc1d12</name>
</gene>
<organism>
    <name type="scientific">Xenopus tropicalis</name>
    <name type="common">Western clawed frog</name>
    <name type="synonym">Silurana tropicalis</name>
    <dbReference type="NCBI Taxonomy" id="8364"/>
    <lineage>
        <taxon>Eukaryota</taxon>
        <taxon>Metazoa</taxon>
        <taxon>Chordata</taxon>
        <taxon>Craniata</taxon>
        <taxon>Vertebrata</taxon>
        <taxon>Euteleostomi</taxon>
        <taxon>Amphibia</taxon>
        <taxon>Batrachia</taxon>
        <taxon>Anura</taxon>
        <taxon>Pipoidea</taxon>
        <taxon>Pipidae</taxon>
        <taxon>Xenopodinae</taxon>
        <taxon>Xenopus</taxon>
        <taxon>Silurana</taxon>
    </lineage>
</organism>
<comment type="function">
    <text>May act as a GTPase-activating protein for Rab family protein(s).</text>
</comment>
<evidence type="ECO:0000255" key="1"/>
<evidence type="ECO:0000255" key="2">
    <source>
        <dbReference type="PROSITE-ProRule" id="PRU00163"/>
    </source>
</evidence>
<evidence type="ECO:0000256" key="3">
    <source>
        <dbReference type="SAM" id="MobiDB-lite"/>
    </source>
</evidence>
<proteinExistence type="evidence at transcript level"/>
<protein>
    <recommendedName>
        <fullName>TBC1 domain family member 12</fullName>
    </recommendedName>
</protein>
<name>TBC12_XENTR</name>
<feature type="chain" id="PRO_0000327656" description="TBC1 domain family member 12">
    <location>
        <begin position="1"/>
        <end position="684"/>
    </location>
</feature>
<feature type="domain" description="Rab-GAP TBC" evidence="2">
    <location>
        <begin position="392"/>
        <end position="602"/>
    </location>
</feature>
<feature type="region of interest" description="Disordered" evidence="3">
    <location>
        <begin position="1"/>
        <end position="41"/>
    </location>
</feature>
<feature type="region of interest" description="Disordered" evidence="3">
    <location>
        <begin position="119"/>
        <end position="138"/>
    </location>
</feature>
<feature type="region of interest" description="Disordered" evidence="3">
    <location>
        <begin position="169"/>
        <end position="202"/>
    </location>
</feature>
<feature type="region of interest" description="Disordered" evidence="3">
    <location>
        <begin position="219"/>
        <end position="290"/>
    </location>
</feature>
<feature type="coiled-coil region" evidence="1">
    <location>
        <begin position="331"/>
        <end position="365"/>
    </location>
</feature>
<feature type="compositionally biased region" description="Acidic residues" evidence="3">
    <location>
        <begin position="25"/>
        <end position="34"/>
    </location>
</feature>
<feature type="compositionally biased region" description="Low complexity" evidence="3">
    <location>
        <begin position="129"/>
        <end position="138"/>
    </location>
</feature>
<feature type="compositionally biased region" description="Basic and acidic residues" evidence="3">
    <location>
        <begin position="172"/>
        <end position="183"/>
    </location>
</feature>
<feature type="compositionally biased region" description="Basic and acidic residues" evidence="3">
    <location>
        <begin position="240"/>
        <end position="250"/>
    </location>
</feature>
<dbReference type="EMBL" id="BC122911">
    <property type="protein sequence ID" value="AAI22912.1"/>
    <property type="molecule type" value="mRNA"/>
</dbReference>
<dbReference type="RefSeq" id="NP_001072568.1">
    <property type="nucleotide sequence ID" value="NM_001079100.1"/>
</dbReference>
<dbReference type="SMR" id="Q0IHY4"/>
<dbReference type="FunCoup" id="Q0IHY4">
    <property type="interactions" value="596"/>
</dbReference>
<dbReference type="STRING" id="8364.ENSXETP00000048162"/>
<dbReference type="PaxDb" id="8364-ENSXETP00000060998"/>
<dbReference type="GeneID" id="780023"/>
<dbReference type="KEGG" id="xtr:780023"/>
<dbReference type="AGR" id="Xenbase:XB-GENE-989549"/>
<dbReference type="CTD" id="23232"/>
<dbReference type="eggNOG" id="KOG2223">
    <property type="taxonomic scope" value="Eukaryota"/>
</dbReference>
<dbReference type="InParanoid" id="Q0IHY4"/>
<dbReference type="OMA" id="GQSARDH"/>
<dbReference type="OrthoDB" id="294251at2759"/>
<dbReference type="Proteomes" id="UP000008143">
    <property type="component" value="Chromosome 7"/>
</dbReference>
<dbReference type="Bgee" id="ENSXETG00000030404">
    <property type="expression patterns" value="Expressed in early embryo and 13 other cell types or tissues"/>
</dbReference>
<dbReference type="GO" id="GO:0005096">
    <property type="term" value="F:GTPase activator activity"/>
    <property type="evidence" value="ECO:0007669"/>
    <property type="project" value="UniProtKB-KW"/>
</dbReference>
<dbReference type="FunFam" id="1.10.8.270:FF:000008">
    <property type="entry name" value="Putative TBC1 domain family member 14"/>
    <property type="match status" value="1"/>
</dbReference>
<dbReference type="FunFam" id="1.10.10.750:FF:000005">
    <property type="entry name" value="TBC1 domain family member 14"/>
    <property type="match status" value="1"/>
</dbReference>
<dbReference type="FunFam" id="1.10.472.80:FF:000006">
    <property type="entry name" value="TBC1 domain family member 14"/>
    <property type="match status" value="1"/>
</dbReference>
<dbReference type="Gene3D" id="1.10.8.270">
    <property type="entry name" value="putative rabgap domain of human tbc1 domain family member 14 like domains"/>
    <property type="match status" value="1"/>
</dbReference>
<dbReference type="Gene3D" id="1.10.10.750">
    <property type="entry name" value="Ypt/Rab-GAP domain of gyp1p, domain 1"/>
    <property type="match status" value="1"/>
</dbReference>
<dbReference type="Gene3D" id="1.10.472.80">
    <property type="entry name" value="Ypt/Rab-GAP domain of gyp1p, domain 3"/>
    <property type="match status" value="1"/>
</dbReference>
<dbReference type="InterPro" id="IPR000195">
    <property type="entry name" value="Rab-GAP-TBC_dom"/>
</dbReference>
<dbReference type="InterPro" id="IPR035969">
    <property type="entry name" value="Rab-GAP_TBC_sf"/>
</dbReference>
<dbReference type="InterPro" id="IPR050302">
    <property type="entry name" value="Rab_GAP_TBC_domain"/>
</dbReference>
<dbReference type="PANTHER" id="PTHR47219">
    <property type="entry name" value="RAB GTPASE-ACTIVATING PROTEIN 1-LIKE"/>
    <property type="match status" value="1"/>
</dbReference>
<dbReference type="PANTHER" id="PTHR47219:SF24">
    <property type="entry name" value="TBC1 DOMAIN FAMILY MEMBER 12"/>
    <property type="match status" value="1"/>
</dbReference>
<dbReference type="Pfam" id="PF00566">
    <property type="entry name" value="RabGAP-TBC"/>
    <property type="match status" value="1"/>
</dbReference>
<dbReference type="SMART" id="SM00164">
    <property type="entry name" value="TBC"/>
    <property type="match status" value="1"/>
</dbReference>
<dbReference type="SUPFAM" id="SSF47923">
    <property type="entry name" value="Ypt/Rab-GAP domain of gyp1p"/>
    <property type="match status" value="2"/>
</dbReference>
<dbReference type="PROSITE" id="PS50086">
    <property type="entry name" value="TBC_RABGAP"/>
    <property type="match status" value="1"/>
</dbReference>